<proteinExistence type="inferred from homology"/>
<sequence length="565" mass="63163">MEPKTKKQRSLYIPYAGPVLLEFPLLNKGSAFSMEERRNFNLLGLLPEVVETIEEQAERAWIQYQGFKTEIDKHIYLRNIQDTNETLFYRLVNNHLDEMMPVIYTPTVGAACERFSEIYRRSRGVFISYQNRHNMDDILQNVPNHNIKVIVVTDGERILGLGDQGIGGMGIPIGKLSLYTACGGISPAYTLPVVLDVGTNNQQLLNDPLYMGWRNPRITDDEYYEFVDEFIQAVKQRWPDVLLQFEDFAQKNAMPLLNRYRNEICSFNDDIQGTAAVTVGTLIAASRAAGGQLSEKKIVFLGAGSAGCGIAEMIIAQTQREGLSEEAARQKVFMVDRFGLLTDKMPNLLPFQTKLVQKRENLSDWDTDSDVLSLLDVVRNVKPDILIGVSGQTGLFTEEIIREMHKHCPRPIVMPLSNPTSRVEATPQDIIAWTEGNALVATGSPFNPVVWKDKIYPIAQCNNAFIFPGIGLGVIASGASRITDEMLMSASETLAQYSPLVLNGEGLVLPELKDIQKVSRAIAFAVGKMAQQQGVAVKTSAEALQQAIDDNFWQAEYRDYRRTSI</sequence>
<keyword id="KW-0479">Metal-binding</keyword>
<keyword id="KW-0520">NAD</keyword>
<keyword id="KW-0560">Oxidoreductase</keyword>
<gene>
    <name evidence="1" type="primary">maeA</name>
    <name type="ordered locus">EFER_1496</name>
</gene>
<name>MAO1_ESCF3</name>
<reference key="1">
    <citation type="journal article" date="2009" name="PLoS Genet.">
        <title>Organised genome dynamics in the Escherichia coli species results in highly diverse adaptive paths.</title>
        <authorList>
            <person name="Touchon M."/>
            <person name="Hoede C."/>
            <person name="Tenaillon O."/>
            <person name="Barbe V."/>
            <person name="Baeriswyl S."/>
            <person name="Bidet P."/>
            <person name="Bingen E."/>
            <person name="Bonacorsi S."/>
            <person name="Bouchier C."/>
            <person name="Bouvet O."/>
            <person name="Calteau A."/>
            <person name="Chiapello H."/>
            <person name="Clermont O."/>
            <person name="Cruveiller S."/>
            <person name="Danchin A."/>
            <person name="Diard M."/>
            <person name="Dossat C."/>
            <person name="Karoui M.E."/>
            <person name="Frapy E."/>
            <person name="Garry L."/>
            <person name="Ghigo J.M."/>
            <person name="Gilles A.M."/>
            <person name="Johnson J."/>
            <person name="Le Bouguenec C."/>
            <person name="Lescat M."/>
            <person name="Mangenot S."/>
            <person name="Martinez-Jehanne V."/>
            <person name="Matic I."/>
            <person name="Nassif X."/>
            <person name="Oztas S."/>
            <person name="Petit M.A."/>
            <person name="Pichon C."/>
            <person name="Rouy Z."/>
            <person name="Ruf C.S."/>
            <person name="Schneider D."/>
            <person name="Tourret J."/>
            <person name="Vacherie B."/>
            <person name="Vallenet D."/>
            <person name="Medigue C."/>
            <person name="Rocha E.P.C."/>
            <person name="Denamur E."/>
        </authorList>
    </citation>
    <scope>NUCLEOTIDE SEQUENCE [LARGE SCALE GENOMIC DNA]</scope>
    <source>
        <strain>ATCC 35469 / DSM 13698 / BCRC 15582 / CCUG 18766 / IAM 14443 / JCM 21226 / LMG 7866 / NBRC 102419 / NCTC 12128 / CDC 0568-73</strain>
    </source>
</reference>
<comment type="catalytic activity">
    <reaction evidence="1">
        <text>(S)-malate + NAD(+) = pyruvate + CO2 + NADH</text>
        <dbReference type="Rhea" id="RHEA:12653"/>
        <dbReference type="ChEBI" id="CHEBI:15361"/>
        <dbReference type="ChEBI" id="CHEBI:15589"/>
        <dbReference type="ChEBI" id="CHEBI:16526"/>
        <dbReference type="ChEBI" id="CHEBI:57540"/>
        <dbReference type="ChEBI" id="CHEBI:57945"/>
        <dbReference type="EC" id="1.1.1.38"/>
    </reaction>
</comment>
<comment type="catalytic activity">
    <reaction evidence="1">
        <text>oxaloacetate + H(+) = pyruvate + CO2</text>
        <dbReference type="Rhea" id="RHEA:15641"/>
        <dbReference type="ChEBI" id="CHEBI:15361"/>
        <dbReference type="ChEBI" id="CHEBI:15378"/>
        <dbReference type="ChEBI" id="CHEBI:16452"/>
        <dbReference type="ChEBI" id="CHEBI:16526"/>
        <dbReference type="EC" id="1.1.1.38"/>
    </reaction>
</comment>
<comment type="cofactor">
    <cofactor evidence="1">
        <name>Mg(2+)</name>
        <dbReference type="ChEBI" id="CHEBI:18420"/>
    </cofactor>
    <cofactor evidence="1">
        <name>Mn(2+)</name>
        <dbReference type="ChEBI" id="CHEBI:29035"/>
    </cofactor>
    <text evidence="1">Divalent metal cations. Prefers magnesium or manganese.</text>
</comment>
<comment type="subunit">
    <text evidence="1">Homotetramer.</text>
</comment>
<comment type="similarity">
    <text evidence="1">Belongs to the malic enzymes family.</text>
</comment>
<dbReference type="EC" id="1.1.1.38" evidence="1"/>
<dbReference type="EMBL" id="CU928158">
    <property type="protein sequence ID" value="CAQ89015.1"/>
    <property type="molecule type" value="Genomic_DNA"/>
</dbReference>
<dbReference type="RefSeq" id="WP_000433464.1">
    <property type="nucleotide sequence ID" value="NC_011740.1"/>
</dbReference>
<dbReference type="SMR" id="B7LQX1"/>
<dbReference type="GeneID" id="93775638"/>
<dbReference type="KEGG" id="efe:EFER_1496"/>
<dbReference type="HOGENOM" id="CLU_011405_5_2_6"/>
<dbReference type="OrthoDB" id="3314528at2"/>
<dbReference type="Proteomes" id="UP000000745">
    <property type="component" value="Chromosome"/>
</dbReference>
<dbReference type="GO" id="GO:0005829">
    <property type="term" value="C:cytosol"/>
    <property type="evidence" value="ECO:0007669"/>
    <property type="project" value="TreeGrafter"/>
</dbReference>
<dbReference type="GO" id="GO:0004471">
    <property type="term" value="F:malate dehydrogenase (decarboxylating) (NAD+) activity"/>
    <property type="evidence" value="ECO:0007669"/>
    <property type="project" value="UniProtKB-UniRule"/>
</dbReference>
<dbReference type="GO" id="GO:0046872">
    <property type="term" value="F:metal ion binding"/>
    <property type="evidence" value="ECO:0007669"/>
    <property type="project" value="UniProtKB-KW"/>
</dbReference>
<dbReference type="GO" id="GO:0051287">
    <property type="term" value="F:NAD binding"/>
    <property type="evidence" value="ECO:0007669"/>
    <property type="project" value="InterPro"/>
</dbReference>
<dbReference type="GO" id="GO:0008948">
    <property type="term" value="F:oxaloacetate decarboxylase activity"/>
    <property type="evidence" value="ECO:0007669"/>
    <property type="project" value="UniProtKB-UniRule"/>
</dbReference>
<dbReference type="GO" id="GO:0006108">
    <property type="term" value="P:malate metabolic process"/>
    <property type="evidence" value="ECO:0007669"/>
    <property type="project" value="TreeGrafter"/>
</dbReference>
<dbReference type="CDD" id="cd05312">
    <property type="entry name" value="NAD_bind_1_malic_enz"/>
    <property type="match status" value="1"/>
</dbReference>
<dbReference type="FunFam" id="3.40.50.10380:FF:000001">
    <property type="entry name" value="NAD-dependent malic enzyme"/>
    <property type="match status" value="1"/>
</dbReference>
<dbReference type="FunFam" id="3.40.50.720:FF:000055">
    <property type="entry name" value="NAD-dependent malic enzyme"/>
    <property type="match status" value="1"/>
</dbReference>
<dbReference type="Gene3D" id="3.40.50.10380">
    <property type="entry name" value="Malic enzyme, N-terminal domain"/>
    <property type="match status" value="1"/>
</dbReference>
<dbReference type="Gene3D" id="3.40.50.720">
    <property type="entry name" value="NAD(P)-binding Rossmann-like Domain"/>
    <property type="match status" value="1"/>
</dbReference>
<dbReference type="HAMAP" id="MF_01619">
    <property type="entry name" value="NAD_malic_enz"/>
    <property type="match status" value="1"/>
</dbReference>
<dbReference type="InterPro" id="IPR046346">
    <property type="entry name" value="Aminoacid_DH-like_N_sf"/>
</dbReference>
<dbReference type="InterPro" id="IPR015884">
    <property type="entry name" value="Malic_enzyme_CS"/>
</dbReference>
<dbReference type="InterPro" id="IPR012301">
    <property type="entry name" value="Malic_N_dom"/>
</dbReference>
<dbReference type="InterPro" id="IPR037062">
    <property type="entry name" value="Malic_N_dom_sf"/>
</dbReference>
<dbReference type="InterPro" id="IPR012302">
    <property type="entry name" value="Malic_NAD-bd"/>
</dbReference>
<dbReference type="InterPro" id="IPR001891">
    <property type="entry name" value="Malic_OxRdtase"/>
</dbReference>
<dbReference type="InterPro" id="IPR036291">
    <property type="entry name" value="NAD(P)-bd_dom_sf"/>
</dbReference>
<dbReference type="InterPro" id="IPR023667">
    <property type="entry name" value="NAD_malic_enz_proteobac"/>
</dbReference>
<dbReference type="NCBIfam" id="NF010052">
    <property type="entry name" value="PRK13529.1"/>
    <property type="match status" value="1"/>
</dbReference>
<dbReference type="PANTHER" id="PTHR23406">
    <property type="entry name" value="MALIC ENZYME-RELATED"/>
    <property type="match status" value="1"/>
</dbReference>
<dbReference type="PANTHER" id="PTHR23406:SF34">
    <property type="entry name" value="NAD-DEPENDENT MALIC ENZYME, MITOCHONDRIAL"/>
    <property type="match status" value="1"/>
</dbReference>
<dbReference type="Pfam" id="PF00390">
    <property type="entry name" value="malic"/>
    <property type="match status" value="1"/>
</dbReference>
<dbReference type="Pfam" id="PF03949">
    <property type="entry name" value="Malic_M"/>
    <property type="match status" value="1"/>
</dbReference>
<dbReference type="PIRSF" id="PIRSF000106">
    <property type="entry name" value="ME"/>
    <property type="match status" value="1"/>
</dbReference>
<dbReference type="PRINTS" id="PR00072">
    <property type="entry name" value="MALOXRDTASE"/>
</dbReference>
<dbReference type="SMART" id="SM01274">
    <property type="entry name" value="malic"/>
    <property type="match status" value="1"/>
</dbReference>
<dbReference type="SMART" id="SM00919">
    <property type="entry name" value="Malic_M"/>
    <property type="match status" value="1"/>
</dbReference>
<dbReference type="SUPFAM" id="SSF53223">
    <property type="entry name" value="Aminoacid dehydrogenase-like, N-terminal domain"/>
    <property type="match status" value="1"/>
</dbReference>
<dbReference type="SUPFAM" id="SSF51735">
    <property type="entry name" value="NAD(P)-binding Rossmann-fold domains"/>
    <property type="match status" value="1"/>
</dbReference>
<dbReference type="PROSITE" id="PS00331">
    <property type="entry name" value="MALIC_ENZYMES"/>
    <property type="match status" value="1"/>
</dbReference>
<feature type="chain" id="PRO_1000185999" description="NAD-dependent malic enzyme">
    <location>
        <begin position="1"/>
        <end position="565"/>
    </location>
</feature>
<feature type="active site" description="Proton donor" evidence="1">
    <location>
        <position position="104"/>
    </location>
</feature>
<feature type="active site" description="Proton acceptor" evidence="1">
    <location>
        <position position="175"/>
    </location>
</feature>
<feature type="binding site" evidence="1">
    <location>
        <position position="157"/>
    </location>
    <ligand>
        <name>NAD(+)</name>
        <dbReference type="ChEBI" id="CHEBI:57540"/>
    </ligand>
</feature>
<feature type="binding site" evidence="1">
    <location>
        <position position="246"/>
    </location>
    <ligand>
        <name>a divalent metal cation</name>
        <dbReference type="ChEBI" id="CHEBI:60240"/>
    </ligand>
</feature>
<feature type="binding site" evidence="1">
    <location>
        <position position="247"/>
    </location>
    <ligand>
        <name>a divalent metal cation</name>
        <dbReference type="ChEBI" id="CHEBI:60240"/>
    </ligand>
</feature>
<feature type="binding site" evidence="1">
    <location>
        <position position="270"/>
    </location>
    <ligand>
        <name>a divalent metal cation</name>
        <dbReference type="ChEBI" id="CHEBI:60240"/>
    </ligand>
</feature>
<feature type="binding site" evidence="1">
    <location>
        <position position="270"/>
    </location>
    <ligand>
        <name>NAD(+)</name>
        <dbReference type="ChEBI" id="CHEBI:57540"/>
    </ligand>
</feature>
<feature type="binding site" evidence="1">
    <location>
        <position position="418"/>
    </location>
    <ligand>
        <name>NAD(+)</name>
        <dbReference type="ChEBI" id="CHEBI:57540"/>
    </ligand>
</feature>
<feature type="site" description="Important for activity" evidence="1">
    <location>
        <position position="270"/>
    </location>
</feature>
<protein>
    <recommendedName>
        <fullName evidence="1">NAD-dependent malic enzyme</fullName>
        <shortName evidence="1">NAD-ME</shortName>
        <ecNumber evidence="1">1.1.1.38</ecNumber>
    </recommendedName>
</protein>
<evidence type="ECO:0000255" key="1">
    <source>
        <dbReference type="HAMAP-Rule" id="MF_01619"/>
    </source>
</evidence>
<organism>
    <name type="scientific">Escherichia fergusonii (strain ATCC 35469 / DSM 13698 / CCUG 18766 / IAM 14443 / JCM 21226 / LMG 7866 / NBRC 102419 / NCTC 12128 / CDC 0568-73)</name>
    <dbReference type="NCBI Taxonomy" id="585054"/>
    <lineage>
        <taxon>Bacteria</taxon>
        <taxon>Pseudomonadati</taxon>
        <taxon>Pseudomonadota</taxon>
        <taxon>Gammaproteobacteria</taxon>
        <taxon>Enterobacterales</taxon>
        <taxon>Enterobacteriaceae</taxon>
        <taxon>Escherichia</taxon>
    </lineage>
</organism>
<accession>B7LQX1</accession>